<accession>P58882</accession>
<feature type="chain" id="PRO_0000158228" description="Histidine biosynthesis bifunctional protein HisB">
    <location>
        <begin position="1"/>
        <end position="375"/>
    </location>
</feature>
<feature type="region of interest" description="Histidinol-phosphatase" evidence="1">
    <location>
        <begin position="1"/>
        <end position="168"/>
    </location>
</feature>
<feature type="region of interest" description="Imidazoleglycerol-phosphate dehydratase" evidence="1">
    <location>
        <begin position="169"/>
        <end position="375"/>
    </location>
</feature>
<feature type="active site" description="Nucleophile" evidence="1">
    <location>
        <position position="8"/>
    </location>
</feature>
<feature type="active site" description="Proton donor" evidence="1">
    <location>
        <position position="10"/>
    </location>
</feature>
<feature type="binding site" evidence="1">
    <location>
        <position position="8"/>
    </location>
    <ligand>
        <name>Mg(2+)</name>
        <dbReference type="ChEBI" id="CHEBI:18420"/>
    </ligand>
</feature>
<feature type="binding site" evidence="1">
    <location>
        <position position="10"/>
    </location>
    <ligand>
        <name>Mg(2+)</name>
        <dbReference type="ChEBI" id="CHEBI:18420"/>
    </ligand>
</feature>
<feature type="binding site" evidence="1">
    <location>
        <position position="128"/>
    </location>
    <ligand>
        <name>Mg(2+)</name>
        <dbReference type="ChEBI" id="CHEBI:18420"/>
    </ligand>
</feature>
<name>HIS7_XANCP</name>
<gene>
    <name evidence="1" type="primary">hisB</name>
    <name type="ordered locus">XCC1811</name>
</gene>
<proteinExistence type="inferred from homology"/>
<organism>
    <name type="scientific">Xanthomonas campestris pv. campestris (strain ATCC 33913 / DSM 3586 / NCPPB 528 / LMG 568 / P 25)</name>
    <dbReference type="NCBI Taxonomy" id="190485"/>
    <lineage>
        <taxon>Bacteria</taxon>
        <taxon>Pseudomonadati</taxon>
        <taxon>Pseudomonadota</taxon>
        <taxon>Gammaproteobacteria</taxon>
        <taxon>Lysobacterales</taxon>
        <taxon>Lysobacteraceae</taxon>
        <taxon>Xanthomonas</taxon>
    </lineage>
</organism>
<comment type="catalytic activity">
    <reaction evidence="1">
        <text>D-erythro-1-(imidazol-4-yl)glycerol 3-phosphate = 3-(imidazol-4-yl)-2-oxopropyl phosphate + H2O</text>
        <dbReference type="Rhea" id="RHEA:11040"/>
        <dbReference type="ChEBI" id="CHEBI:15377"/>
        <dbReference type="ChEBI" id="CHEBI:57766"/>
        <dbReference type="ChEBI" id="CHEBI:58278"/>
        <dbReference type="EC" id="4.2.1.19"/>
    </reaction>
</comment>
<comment type="catalytic activity">
    <reaction evidence="1">
        <text>L-histidinol phosphate + H2O = L-histidinol + phosphate</text>
        <dbReference type="Rhea" id="RHEA:14465"/>
        <dbReference type="ChEBI" id="CHEBI:15377"/>
        <dbReference type="ChEBI" id="CHEBI:43474"/>
        <dbReference type="ChEBI" id="CHEBI:57699"/>
        <dbReference type="ChEBI" id="CHEBI:57980"/>
        <dbReference type="EC" id="3.1.3.15"/>
    </reaction>
</comment>
<comment type="cofactor">
    <cofactor evidence="1">
        <name>Mg(2+)</name>
        <dbReference type="ChEBI" id="CHEBI:18420"/>
    </cofactor>
</comment>
<comment type="pathway">
    <text evidence="1">Amino-acid biosynthesis; L-histidine biosynthesis; L-histidine from 5-phospho-alpha-D-ribose 1-diphosphate: step 6/9.</text>
</comment>
<comment type="pathway">
    <text evidence="1">Amino-acid biosynthesis; L-histidine biosynthesis; L-histidine from 5-phospho-alpha-D-ribose 1-diphosphate: step 8/9.</text>
</comment>
<comment type="subcellular location">
    <subcellularLocation>
        <location evidence="1">Cytoplasm</location>
    </subcellularLocation>
</comment>
<comment type="similarity">
    <text evidence="1">In the N-terminal section; belongs to the histidinol-phosphatase family.</text>
</comment>
<comment type="similarity">
    <text evidence="1">In the C-terminal section; belongs to the imidazoleglycerol-phosphate dehydratase family.</text>
</comment>
<evidence type="ECO:0000255" key="1">
    <source>
        <dbReference type="HAMAP-Rule" id="MF_01022"/>
    </source>
</evidence>
<reference key="1">
    <citation type="journal article" date="2002" name="Nature">
        <title>Comparison of the genomes of two Xanthomonas pathogens with differing host specificities.</title>
        <authorList>
            <person name="da Silva A.C.R."/>
            <person name="Ferro J.A."/>
            <person name="Reinach F.C."/>
            <person name="Farah C.S."/>
            <person name="Furlan L.R."/>
            <person name="Quaggio R.B."/>
            <person name="Monteiro-Vitorello C.B."/>
            <person name="Van Sluys M.A."/>
            <person name="Almeida N.F. Jr."/>
            <person name="Alves L.M.C."/>
            <person name="do Amaral A.M."/>
            <person name="Bertolini M.C."/>
            <person name="Camargo L.E.A."/>
            <person name="Camarotte G."/>
            <person name="Cannavan F."/>
            <person name="Cardozo J."/>
            <person name="Chambergo F."/>
            <person name="Ciapina L.P."/>
            <person name="Cicarelli R.M.B."/>
            <person name="Coutinho L.L."/>
            <person name="Cursino-Santos J.R."/>
            <person name="El-Dorry H."/>
            <person name="Faria J.B."/>
            <person name="Ferreira A.J.S."/>
            <person name="Ferreira R.C.C."/>
            <person name="Ferro M.I.T."/>
            <person name="Formighieri E.F."/>
            <person name="Franco M.C."/>
            <person name="Greggio C.C."/>
            <person name="Gruber A."/>
            <person name="Katsuyama A.M."/>
            <person name="Kishi L.T."/>
            <person name="Leite R.P."/>
            <person name="Lemos E.G.M."/>
            <person name="Lemos M.V.F."/>
            <person name="Locali E.C."/>
            <person name="Machado M.A."/>
            <person name="Madeira A.M.B.N."/>
            <person name="Martinez-Rossi N.M."/>
            <person name="Martins E.C."/>
            <person name="Meidanis J."/>
            <person name="Menck C.F.M."/>
            <person name="Miyaki C.Y."/>
            <person name="Moon D.H."/>
            <person name="Moreira L.M."/>
            <person name="Novo M.T.M."/>
            <person name="Okura V.K."/>
            <person name="Oliveira M.C."/>
            <person name="Oliveira V.R."/>
            <person name="Pereira H.A."/>
            <person name="Rossi A."/>
            <person name="Sena J.A.D."/>
            <person name="Silva C."/>
            <person name="de Souza R.F."/>
            <person name="Spinola L.A.F."/>
            <person name="Takita M.A."/>
            <person name="Tamura R.E."/>
            <person name="Teixeira E.C."/>
            <person name="Tezza R.I.D."/>
            <person name="Trindade dos Santos M."/>
            <person name="Truffi D."/>
            <person name="Tsai S.M."/>
            <person name="White F.F."/>
            <person name="Setubal J.C."/>
            <person name="Kitajima J.P."/>
        </authorList>
    </citation>
    <scope>NUCLEOTIDE SEQUENCE [LARGE SCALE GENOMIC DNA]</scope>
    <source>
        <strain>ATCC 33913 / DSM 3586 / NCPPB 528 / LMG 568 / P 25</strain>
    </source>
</reference>
<protein>
    <recommendedName>
        <fullName evidence="1">Histidine biosynthesis bifunctional protein HisB</fullName>
    </recommendedName>
    <domain>
        <recommendedName>
            <fullName evidence="1">Histidinol-phosphatase</fullName>
            <ecNumber evidence="1">3.1.3.15</ecNumber>
        </recommendedName>
    </domain>
    <domain>
        <recommendedName>
            <fullName evidence="1">Imidazoleglycerol-phosphate dehydratase</fullName>
            <shortName evidence="1">IGPD</shortName>
            <ecNumber evidence="1">4.2.1.19</ecNumber>
        </recommendedName>
    </domain>
</protein>
<dbReference type="EC" id="3.1.3.15" evidence="1"/>
<dbReference type="EC" id="4.2.1.19" evidence="1"/>
<dbReference type="EMBL" id="AE008922">
    <property type="protein sequence ID" value="AAM41100.1"/>
    <property type="molecule type" value="Genomic_DNA"/>
</dbReference>
<dbReference type="RefSeq" id="NP_637176.1">
    <property type="nucleotide sequence ID" value="NC_003902.1"/>
</dbReference>
<dbReference type="RefSeq" id="WP_011036981.1">
    <property type="nucleotide sequence ID" value="NC_003902.1"/>
</dbReference>
<dbReference type="SMR" id="P58882"/>
<dbReference type="STRING" id="190485.XCC1811"/>
<dbReference type="EnsemblBacteria" id="AAM41100">
    <property type="protein sequence ID" value="AAM41100"/>
    <property type="gene ID" value="XCC1811"/>
</dbReference>
<dbReference type="KEGG" id="xcc:XCC1811"/>
<dbReference type="PATRIC" id="fig|190485.4.peg.1931"/>
<dbReference type="eggNOG" id="COG0131">
    <property type="taxonomic scope" value="Bacteria"/>
</dbReference>
<dbReference type="eggNOG" id="COG0241">
    <property type="taxonomic scope" value="Bacteria"/>
</dbReference>
<dbReference type="HOGENOM" id="CLU_044308_0_0_6"/>
<dbReference type="OrthoDB" id="9790411at2"/>
<dbReference type="UniPathway" id="UPA00031">
    <property type="reaction ID" value="UER00011"/>
</dbReference>
<dbReference type="UniPathway" id="UPA00031">
    <property type="reaction ID" value="UER00013"/>
</dbReference>
<dbReference type="Proteomes" id="UP000001010">
    <property type="component" value="Chromosome"/>
</dbReference>
<dbReference type="GO" id="GO:0005737">
    <property type="term" value="C:cytoplasm"/>
    <property type="evidence" value="ECO:0007669"/>
    <property type="project" value="UniProtKB-SubCell"/>
</dbReference>
<dbReference type="GO" id="GO:0004401">
    <property type="term" value="F:histidinol-phosphatase activity"/>
    <property type="evidence" value="ECO:0007669"/>
    <property type="project" value="UniProtKB-UniRule"/>
</dbReference>
<dbReference type="GO" id="GO:0004424">
    <property type="term" value="F:imidazoleglycerol-phosphate dehydratase activity"/>
    <property type="evidence" value="ECO:0000318"/>
    <property type="project" value="GO_Central"/>
</dbReference>
<dbReference type="GO" id="GO:0046872">
    <property type="term" value="F:metal ion binding"/>
    <property type="evidence" value="ECO:0007669"/>
    <property type="project" value="UniProtKB-KW"/>
</dbReference>
<dbReference type="GO" id="GO:0000105">
    <property type="term" value="P:L-histidine biosynthetic process"/>
    <property type="evidence" value="ECO:0000318"/>
    <property type="project" value="GO_Central"/>
</dbReference>
<dbReference type="CDD" id="cd07914">
    <property type="entry name" value="IGPD"/>
    <property type="match status" value="1"/>
</dbReference>
<dbReference type="FunFam" id="3.30.230.40:FF:000001">
    <property type="entry name" value="Imidazoleglycerol-phosphate dehydratase HisB"/>
    <property type="match status" value="1"/>
</dbReference>
<dbReference type="FunFam" id="3.30.230.40:FF:000003">
    <property type="entry name" value="Imidazoleglycerol-phosphate dehydratase HisB"/>
    <property type="match status" value="1"/>
</dbReference>
<dbReference type="Gene3D" id="3.40.50.1000">
    <property type="entry name" value="HAD superfamily/HAD-like"/>
    <property type="match status" value="1"/>
</dbReference>
<dbReference type="Gene3D" id="3.30.230.40">
    <property type="entry name" value="Imidazole glycerol phosphate dehydratase, domain 1"/>
    <property type="match status" value="2"/>
</dbReference>
<dbReference type="HAMAP" id="MF_01022">
    <property type="entry name" value="Bifunc_HisB"/>
    <property type="match status" value="1"/>
</dbReference>
<dbReference type="HAMAP" id="MF_00076">
    <property type="entry name" value="HisB"/>
    <property type="match status" value="1"/>
</dbReference>
<dbReference type="InterPro" id="IPR036412">
    <property type="entry name" value="HAD-like_sf"/>
</dbReference>
<dbReference type="InterPro" id="IPR006549">
    <property type="entry name" value="HAD-SF_hydro_IIIA"/>
</dbReference>
<dbReference type="InterPro" id="IPR023214">
    <property type="entry name" value="HAD_sf"/>
</dbReference>
<dbReference type="InterPro" id="IPR020566">
    <property type="entry name" value="His_synth_bifunc_HisB"/>
</dbReference>
<dbReference type="InterPro" id="IPR005954">
    <property type="entry name" value="HisB_N"/>
</dbReference>
<dbReference type="InterPro" id="IPR006543">
    <property type="entry name" value="Histidinol-phos"/>
</dbReference>
<dbReference type="InterPro" id="IPR038494">
    <property type="entry name" value="IGPD_sf"/>
</dbReference>
<dbReference type="InterPro" id="IPR000807">
    <property type="entry name" value="ImidazoleglycerolP_deHydtase"/>
</dbReference>
<dbReference type="InterPro" id="IPR020565">
    <property type="entry name" value="ImidazoleglycerP_deHydtase_CS"/>
</dbReference>
<dbReference type="InterPro" id="IPR020568">
    <property type="entry name" value="Ribosomal_Su5_D2-typ_SF"/>
</dbReference>
<dbReference type="NCBIfam" id="TIGR01662">
    <property type="entry name" value="HAD-SF-IIIA"/>
    <property type="match status" value="1"/>
</dbReference>
<dbReference type="NCBIfam" id="TIGR01261">
    <property type="entry name" value="hisB_Nterm"/>
    <property type="match status" value="1"/>
</dbReference>
<dbReference type="NCBIfam" id="TIGR01656">
    <property type="entry name" value="Histidinol-ppas"/>
    <property type="match status" value="1"/>
</dbReference>
<dbReference type="NCBIfam" id="NF002111">
    <property type="entry name" value="PRK00951.2-1"/>
    <property type="match status" value="1"/>
</dbReference>
<dbReference type="NCBIfam" id="NF003937">
    <property type="entry name" value="PRK05446.1"/>
    <property type="match status" value="1"/>
</dbReference>
<dbReference type="PANTHER" id="PTHR23133:SF2">
    <property type="entry name" value="IMIDAZOLEGLYCEROL-PHOSPHATE DEHYDRATASE"/>
    <property type="match status" value="1"/>
</dbReference>
<dbReference type="PANTHER" id="PTHR23133">
    <property type="entry name" value="IMIDAZOLEGLYCEROL-PHOSPHATE DEHYDRATASE HIS7"/>
    <property type="match status" value="1"/>
</dbReference>
<dbReference type="Pfam" id="PF13242">
    <property type="entry name" value="Hydrolase_like"/>
    <property type="match status" value="1"/>
</dbReference>
<dbReference type="Pfam" id="PF00475">
    <property type="entry name" value="IGPD"/>
    <property type="match status" value="1"/>
</dbReference>
<dbReference type="SUPFAM" id="SSF56784">
    <property type="entry name" value="HAD-like"/>
    <property type="match status" value="1"/>
</dbReference>
<dbReference type="SUPFAM" id="SSF54211">
    <property type="entry name" value="Ribosomal protein S5 domain 2-like"/>
    <property type="match status" value="2"/>
</dbReference>
<dbReference type="PROSITE" id="PS00954">
    <property type="entry name" value="IGP_DEHYDRATASE_1"/>
    <property type="match status" value="1"/>
</dbReference>
<dbReference type="PROSITE" id="PS00955">
    <property type="entry name" value="IGP_DEHYDRATASE_2"/>
    <property type="match status" value="1"/>
</dbReference>
<keyword id="KW-0028">Amino-acid biosynthesis</keyword>
<keyword id="KW-0963">Cytoplasm</keyword>
<keyword id="KW-0368">Histidine biosynthesis</keyword>
<keyword id="KW-0378">Hydrolase</keyword>
<keyword id="KW-0456">Lyase</keyword>
<keyword id="KW-0460">Magnesium</keyword>
<keyword id="KW-0479">Metal-binding</keyword>
<keyword id="KW-0511">Multifunctional enzyme</keyword>
<keyword id="KW-1185">Reference proteome</keyword>
<sequence length="375" mass="41812">MTPILFVDRDGTLITEPADFQIDAYEKLRFVDGVIPAMLKLRDAGYQFVIVSNQDGLGSESYPQASFDGPNNLMLQIFASQGIVFREVLIDCSWPADNAPTRKPGVGLMVPYLQDRTIDWSRSAMVGDRITDIQFAQNLNIRGFQLRTEQFGGDWDWAGIAHELADAPRRAVVQRNTKETRIRVELDLDRVAEPHTATGLPFFDHMLEQIGKHGGFALDIRAEGDLHIDEHHTIEDTGLALGQALREALGDKRGIGRYGFDPDDSPWRVAGDTTQHGFTLPMDETIASAALDFSGRPYFVFDGDFKRERVGDMPTELVPHFFRSVCDASGLNLHLHVRGENDHHKVEGCFKALARALRQAIRREGTALPSTKGAL</sequence>